<keyword id="KW-0520">NAD</keyword>
<keyword id="KW-0560">Oxidoreductase</keyword>
<keyword id="KW-1185">Reference proteome</keyword>
<proteinExistence type="inferred from homology"/>
<feature type="chain" id="PRO_0000170698" description="Mannitol-1-phosphate 5-dehydrogenase">
    <location>
        <begin position="1"/>
        <end position="373"/>
    </location>
</feature>
<feature type="binding site" evidence="1">
    <location>
        <begin position="3"/>
        <end position="14"/>
    </location>
    <ligand>
        <name>NAD(+)</name>
        <dbReference type="ChEBI" id="CHEBI:57540"/>
    </ligand>
</feature>
<feature type="sequence conflict" description="In Ref. 1; BAA07351 and 2; BAA09030." evidence="2" ref="1 2">
    <original>V</original>
    <variation>L</variation>
    <location>
        <position position="149"/>
    </location>
</feature>
<feature type="sequence conflict" description="In Ref. 1; BAA07351 and 2; BAA09030." evidence="2" ref="1 2">
    <original>KIIGRFENPFISDDVTRVARSPLRKLGEND</original>
    <variation>NQRSLLKSFHFGRCDPRSEVTSQKTGRKC</variation>
    <location>
        <begin position="273"/>
        <end position="302"/>
    </location>
</feature>
<gene>
    <name type="primary">mtlD</name>
    <name type="synonym">mtlB</name>
    <name type="ordered locus">BSU03990</name>
</gene>
<protein>
    <recommendedName>
        <fullName>Mannitol-1-phosphate 5-dehydrogenase</fullName>
        <ecNumber>1.1.1.17</ecNumber>
    </recommendedName>
</protein>
<comment type="catalytic activity">
    <reaction>
        <text>D-mannitol 1-phosphate + NAD(+) = beta-D-fructose 6-phosphate + NADH + H(+)</text>
        <dbReference type="Rhea" id="RHEA:19661"/>
        <dbReference type="ChEBI" id="CHEBI:15378"/>
        <dbReference type="ChEBI" id="CHEBI:57540"/>
        <dbReference type="ChEBI" id="CHEBI:57634"/>
        <dbReference type="ChEBI" id="CHEBI:57945"/>
        <dbReference type="ChEBI" id="CHEBI:61381"/>
        <dbReference type="EC" id="1.1.1.17"/>
    </reaction>
</comment>
<comment type="similarity">
    <text evidence="2">Belongs to the mannitol dehydrogenase family.</text>
</comment>
<comment type="sequence caution" evidence="2">
    <conflict type="frameshift">
        <sequence resource="EMBL-CDS" id="BAA07351"/>
    </conflict>
</comment>
<comment type="sequence caution" evidence="2">
    <conflict type="frameshift">
        <sequence resource="EMBL-CDS" id="BAA09030"/>
    </conflict>
</comment>
<sequence length="373" mass="41118">MIALHFGAGNIGRGFIGALLHHSGYDVVFADVNETMVSLLNEKKEYTVELAEEGRSSEIIGPVSAINSGSQTEELYRLMNEAALITTAVGPNVLKLIAPSIAEGLRRRNTANTLNIIACENMIGGSSFLKKEIYSHLTEAEQKSVSETVGFPNSAVDRIVPIQHHEDPLKVSVEPFFEWVIDESGFKGKTPVINGALFVDDLTPYIERKLFTVNTGHAVTAYVGYQRGLKTVKEAIDHPEIRRVVHSALLETGDYLVKSYGFKQTEHEQYIKKIIGRFENPFISDDVTRVARSPLRKLGENDRLVGPAKKIKEPNALAEGIAAALRFDFTGDPEAVELQALIEEKGYSGVLQEVCGIQSHEPLHAIILKKLNQ</sequence>
<dbReference type="EC" id="1.1.1.17"/>
<dbReference type="EMBL" id="D38161">
    <property type="protein sequence ID" value="BAA07351.1"/>
    <property type="status" value="ALT_FRAME"/>
    <property type="molecule type" value="Genomic_DNA"/>
</dbReference>
<dbReference type="EMBL" id="D50453">
    <property type="protein sequence ID" value="BAA09030.1"/>
    <property type="status" value="ALT_FRAME"/>
    <property type="molecule type" value="Genomic_DNA"/>
</dbReference>
<dbReference type="EMBL" id="AL009126">
    <property type="protein sequence ID" value="CAB12207.2"/>
    <property type="molecule type" value="Genomic_DNA"/>
</dbReference>
<dbReference type="PIR" id="I39888">
    <property type="entry name" value="I39888"/>
</dbReference>
<dbReference type="RefSeq" id="NP_388281.2">
    <property type="nucleotide sequence ID" value="NC_000964.3"/>
</dbReference>
<dbReference type="RefSeq" id="WP_003246548.1">
    <property type="nucleotide sequence ID" value="NZ_OZ025638.1"/>
</dbReference>
<dbReference type="SMR" id="P42957"/>
<dbReference type="FunCoup" id="P42957">
    <property type="interactions" value="55"/>
</dbReference>
<dbReference type="STRING" id="224308.BSU03990"/>
<dbReference type="PaxDb" id="224308-BSU03990"/>
<dbReference type="EnsemblBacteria" id="CAB12207">
    <property type="protein sequence ID" value="CAB12207"/>
    <property type="gene ID" value="BSU_03990"/>
</dbReference>
<dbReference type="GeneID" id="939968"/>
<dbReference type="KEGG" id="bsu:BSU03990"/>
<dbReference type="PATRIC" id="fig|224308.179.peg.423"/>
<dbReference type="eggNOG" id="COG0246">
    <property type="taxonomic scope" value="Bacteria"/>
</dbReference>
<dbReference type="InParanoid" id="P42957"/>
<dbReference type="OrthoDB" id="271711at2"/>
<dbReference type="PhylomeDB" id="P42957"/>
<dbReference type="BioCyc" id="BSUB:BSU03990-MONOMER"/>
<dbReference type="Proteomes" id="UP000001570">
    <property type="component" value="Chromosome"/>
</dbReference>
<dbReference type="GO" id="GO:0005829">
    <property type="term" value="C:cytosol"/>
    <property type="evidence" value="ECO:0000318"/>
    <property type="project" value="GO_Central"/>
</dbReference>
<dbReference type="GO" id="GO:0008926">
    <property type="term" value="F:mannitol-1-phosphate 5-dehydrogenase activity"/>
    <property type="evidence" value="ECO:0000318"/>
    <property type="project" value="GO_Central"/>
</dbReference>
<dbReference type="GO" id="GO:0019592">
    <property type="term" value="P:mannitol catabolic process"/>
    <property type="evidence" value="ECO:0000318"/>
    <property type="project" value="GO_Central"/>
</dbReference>
<dbReference type="FunFam" id="1.10.1040.10:FF:000009">
    <property type="entry name" value="Mannitol-1-phosphate 5-dehydrogenase"/>
    <property type="match status" value="1"/>
</dbReference>
<dbReference type="Gene3D" id="1.10.1040.10">
    <property type="entry name" value="N-(1-d-carboxylethyl)-l-norvaline Dehydrogenase, domain 2"/>
    <property type="match status" value="1"/>
</dbReference>
<dbReference type="Gene3D" id="3.40.50.720">
    <property type="entry name" value="NAD(P)-binding Rossmann-like Domain"/>
    <property type="match status" value="1"/>
</dbReference>
<dbReference type="HAMAP" id="MF_00196">
    <property type="entry name" value="Mannitol_dehydrog"/>
    <property type="match status" value="1"/>
</dbReference>
<dbReference type="InterPro" id="IPR008927">
    <property type="entry name" value="6-PGluconate_DH-like_C_sf"/>
</dbReference>
<dbReference type="InterPro" id="IPR013328">
    <property type="entry name" value="6PGD_dom2"/>
</dbReference>
<dbReference type="InterPro" id="IPR023028">
    <property type="entry name" value="Mannitol_1_phos_5_DH"/>
</dbReference>
<dbReference type="InterPro" id="IPR000669">
    <property type="entry name" value="Mannitol_DH"/>
</dbReference>
<dbReference type="InterPro" id="IPR013118">
    <property type="entry name" value="Mannitol_DH_C"/>
</dbReference>
<dbReference type="InterPro" id="IPR023027">
    <property type="entry name" value="Mannitol_DH_CS"/>
</dbReference>
<dbReference type="InterPro" id="IPR013131">
    <property type="entry name" value="Mannitol_DH_N"/>
</dbReference>
<dbReference type="InterPro" id="IPR036291">
    <property type="entry name" value="NAD(P)-bd_dom_sf"/>
</dbReference>
<dbReference type="NCBIfam" id="NF002646">
    <property type="entry name" value="PRK02318.1-2"/>
    <property type="match status" value="1"/>
</dbReference>
<dbReference type="NCBIfam" id="NF002647">
    <property type="entry name" value="PRK02318.1-3"/>
    <property type="match status" value="1"/>
</dbReference>
<dbReference type="NCBIfam" id="NF002649">
    <property type="entry name" value="PRK02318.2-1"/>
    <property type="match status" value="1"/>
</dbReference>
<dbReference type="NCBIfam" id="NF002652">
    <property type="entry name" value="PRK02318.2-5"/>
    <property type="match status" value="1"/>
</dbReference>
<dbReference type="PANTHER" id="PTHR30524:SF0">
    <property type="entry name" value="ALTRONATE OXIDOREDUCTASE-RELATED"/>
    <property type="match status" value="1"/>
</dbReference>
<dbReference type="PANTHER" id="PTHR30524">
    <property type="entry name" value="MANNITOL-1-PHOSPHATE 5-DEHYDROGENASE"/>
    <property type="match status" value="1"/>
</dbReference>
<dbReference type="Pfam" id="PF01232">
    <property type="entry name" value="Mannitol_dh"/>
    <property type="match status" value="1"/>
</dbReference>
<dbReference type="Pfam" id="PF08125">
    <property type="entry name" value="Mannitol_dh_C"/>
    <property type="match status" value="1"/>
</dbReference>
<dbReference type="PRINTS" id="PR00084">
    <property type="entry name" value="MTLDHDRGNASE"/>
</dbReference>
<dbReference type="SUPFAM" id="SSF48179">
    <property type="entry name" value="6-phosphogluconate dehydrogenase C-terminal domain-like"/>
    <property type="match status" value="1"/>
</dbReference>
<dbReference type="SUPFAM" id="SSF51735">
    <property type="entry name" value="NAD(P)-binding Rossmann-fold domains"/>
    <property type="match status" value="1"/>
</dbReference>
<dbReference type="PROSITE" id="PS00974">
    <property type="entry name" value="MANNITOL_DHGENASE"/>
    <property type="match status" value="1"/>
</dbReference>
<evidence type="ECO:0000250" key="1"/>
<evidence type="ECO:0000305" key="2"/>
<name>MTLD_BACSU</name>
<organism>
    <name type="scientific">Bacillus subtilis (strain 168)</name>
    <dbReference type="NCBI Taxonomy" id="224308"/>
    <lineage>
        <taxon>Bacteria</taxon>
        <taxon>Bacillati</taxon>
        <taxon>Bacillota</taxon>
        <taxon>Bacilli</taxon>
        <taxon>Bacillales</taxon>
        <taxon>Bacillaceae</taxon>
        <taxon>Bacillus</taxon>
    </lineage>
</organism>
<reference key="1">
    <citation type="journal article" date="1995" name="Microbiology">
        <title>Determination of a 17,484 bp nucleotide sequence around the 39 degrees region of the Bacillus subtilis chromosome and similarity analysis of the products of putative ORFs.</title>
        <authorList>
            <person name="Akagawa E."/>
            <person name="Kurita K."/>
            <person name="Sugawara T."/>
            <person name="Nakamura K."/>
            <person name="Kasahara Y."/>
            <person name="Ogasawara N."/>
            <person name="Yamane K."/>
        </authorList>
    </citation>
    <scope>NUCLEOTIDE SEQUENCE [GENOMIC DNA]</scope>
    <source>
        <strain>168</strain>
    </source>
</reference>
<reference key="2">
    <citation type="submission" date="1995-10" db="EMBL/GenBank/DDBJ databases">
        <authorList>
            <person name="Yamane K."/>
        </authorList>
    </citation>
    <scope>SEQUENCE REVISION</scope>
</reference>
<reference key="3">
    <citation type="journal article" date="1996" name="Microbiology">
        <title>The 25 degrees-36 degrees region of the Bacillus subtilis chromosome: determination of the sequence of a 146 kb segment and identification of 113 genes.</title>
        <authorList>
            <person name="Yamane K."/>
            <person name="Kumano M."/>
            <person name="Kurita K."/>
        </authorList>
    </citation>
    <scope>NUCLEOTIDE SEQUENCE [GENOMIC DNA]</scope>
    <source>
        <strain>168</strain>
    </source>
</reference>
<reference key="4">
    <citation type="journal article" date="1997" name="Nature">
        <title>The complete genome sequence of the Gram-positive bacterium Bacillus subtilis.</title>
        <authorList>
            <person name="Kunst F."/>
            <person name="Ogasawara N."/>
            <person name="Moszer I."/>
            <person name="Albertini A.M."/>
            <person name="Alloni G."/>
            <person name="Azevedo V."/>
            <person name="Bertero M.G."/>
            <person name="Bessieres P."/>
            <person name="Bolotin A."/>
            <person name="Borchert S."/>
            <person name="Borriss R."/>
            <person name="Boursier L."/>
            <person name="Brans A."/>
            <person name="Braun M."/>
            <person name="Brignell S.C."/>
            <person name="Bron S."/>
            <person name="Brouillet S."/>
            <person name="Bruschi C.V."/>
            <person name="Caldwell B."/>
            <person name="Capuano V."/>
            <person name="Carter N.M."/>
            <person name="Choi S.-K."/>
            <person name="Codani J.-J."/>
            <person name="Connerton I.F."/>
            <person name="Cummings N.J."/>
            <person name="Daniel R.A."/>
            <person name="Denizot F."/>
            <person name="Devine K.M."/>
            <person name="Duesterhoeft A."/>
            <person name="Ehrlich S.D."/>
            <person name="Emmerson P.T."/>
            <person name="Entian K.-D."/>
            <person name="Errington J."/>
            <person name="Fabret C."/>
            <person name="Ferrari E."/>
            <person name="Foulger D."/>
            <person name="Fritz C."/>
            <person name="Fujita M."/>
            <person name="Fujita Y."/>
            <person name="Fuma S."/>
            <person name="Galizzi A."/>
            <person name="Galleron N."/>
            <person name="Ghim S.-Y."/>
            <person name="Glaser P."/>
            <person name="Goffeau A."/>
            <person name="Golightly E.J."/>
            <person name="Grandi G."/>
            <person name="Guiseppi G."/>
            <person name="Guy B.J."/>
            <person name="Haga K."/>
            <person name="Haiech J."/>
            <person name="Harwood C.R."/>
            <person name="Henaut A."/>
            <person name="Hilbert H."/>
            <person name="Holsappel S."/>
            <person name="Hosono S."/>
            <person name="Hullo M.-F."/>
            <person name="Itaya M."/>
            <person name="Jones L.-M."/>
            <person name="Joris B."/>
            <person name="Karamata D."/>
            <person name="Kasahara Y."/>
            <person name="Klaerr-Blanchard M."/>
            <person name="Klein C."/>
            <person name="Kobayashi Y."/>
            <person name="Koetter P."/>
            <person name="Koningstein G."/>
            <person name="Krogh S."/>
            <person name="Kumano M."/>
            <person name="Kurita K."/>
            <person name="Lapidus A."/>
            <person name="Lardinois S."/>
            <person name="Lauber J."/>
            <person name="Lazarevic V."/>
            <person name="Lee S.-M."/>
            <person name="Levine A."/>
            <person name="Liu H."/>
            <person name="Masuda S."/>
            <person name="Mauel C."/>
            <person name="Medigue C."/>
            <person name="Medina N."/>
            <person name="Mellado R.P."/>
            <person name="Mizuno M."/>
            <person name="Moestl D."/>
            <person name="Nakai S."/>
            <person name="Noback M."/>
            <person name="Noone D."/>
            <person name="O'Reilly M."/>
            <person name="Ogawa K."/>
            <person name="Ogiwara A."/>
            <person name="Oudega B."/>
            <person name="Park S.-H."/>
            <person name="Parro V."/>
            <person name="Pohl T.M."/>
            <person name="Portetelle D."/>
            <person name="Porwollik S."/>
            <person name="Prescott A.M."/>
            <person name="Presecan E."/>
            <person name="Pujic P."/>
            <person name="Purnelle B."/>
            <person name="Rapoport G."/>
            <person name="Rey M."/>
            <person name="Reynolds S."/>
            <person name="Rieger M."/>
            <person name="Rivolta C."/>
            <person name="Rocha E."/>
            <person name="Roche B."/>
            <person name="Rose M."/>
            <person name="Sadaie Y."/>
            <person name="Sato T."/>
            <person name="Scanlan E."/>
            <person name="Schleich S."/>
            <person name="Schroeter R."/>
            <person name="Scoffone F."/>
            <person name="Sekiguchi J."/>
            <person name="Sekowska A."/>
            <person name="Seror S.J."/>
            <person name="Serror P."/>
            <person name="Shin B.-S."/>
            <person name="Soldo B."/>
            <person name="Sorokin A."/>
            <person name="Tacconi E."/>
            <person name="Takagi T."/>
            <person name="Takahashi H."/>
            <person name="Takemaru K."/>
            <person name="Takeuchi M."/>
            <person name="Tamakoshi A."/>
            <person name="Tanaka T."/>
            <person name="Terpstra P."/>
            <person name="Tognoni A."/>
            <person name="Tosato V."/>
            <person name="Uchiyama S."/>
            <person name="Vandenbol M."/>
            <person name="Vannier F."/>
            <person name="Vassarotti A."/>
            <person name="Viari A."/>
            <person name="Wambutt R."/>
            <person name="Wedler E."/>
            <person name="Wedler H."/>
            <person name="Weitzenegger T."/>
            <person name="Winters P."/>
            <person name="Wipat A."/>
            <person name="Yamamoto H."/>
            <person name="Yamane K."/>
            <person name="Yasumoto K."/>
            <person name="Yata K."/>
            <person name="Yoshida K."/>
            <person name="Yoshikawa H.-F."/>
            <person name="Zumstein E."/>
            <person name="Yoshikawa H."/>
            <person name="Danchin A."/>
        </authorList>
    </citation>
    <scope>NUCLEOTIDE SEQUENCE [LARGE SCALE GENOMIC DNA]</scope>
    <source>
        <strain>168</strain>
    </source>
</reference>
<reference key="5">
    <citation type="journal article" date="2009" name="Microbiology">
        <title>From a consortium sequence to a unified sequence: the Bacillus subtilis 168 reference genome a decade later.</title>
        <authorList>
            <person name="Barbe V."/>
            <person name="Cruveiller S."/>
            <person name="Kunst F."/>
            <person name="Lenoble P."/>
            <person name="Meurice G."/>
            <person name="Sekowska A."/>
            <person name="Vallenet D."/>
            <person name="Wang T."/>
            <person name="Moszer I."/>
            <person name="Medigue C."/>
            <person name="Danchin A."/>
        </authorList>
    </citation>
    <scope>SEQUENCE REVISION TO 149; 273-302 AND C-TERMINUS</scope>
</reference>
<accession>P42957</accession>